<feature type="signal peptide" evidence="4">
    <location>
        <begin position="1"/>
        <end position="20"/>
    </location>
</feature>
<feature type="chain" id="PRO_0000438773" description="Low affinity immunoglobulin gamma Fc region receptor III-A" evidence="4">
    <location>
        <begin position="21"/>
        <end position="254"/>
    </location>
</feature>
<feature type="topological domain" description="Extracellular" evidence="9">
    <location>
        <begin position="21"/>
        <end position="209"/>
    </location>
</feature>
<feature type="transmembrane region" description="Helical" evidence="4">
    <location>
        <begin position="210"/>
        <end position="230"/>
    </location>
</feature>
<feature type="topological domain" description="Cytoplasmic" evidence="9">
    <location>
        <begin position="231"/>
        <end position="254"/>
    </location>
</feature>
<feature type="domain" description="Ig-like C2-type 1" evidence="5">
    <location>
        <begin position="23"/>
        <end position="104"/>
    </location>
</feature>
<feature type="domain" description="Ig-like C2-type 2" evidence="5">
    <location>
        <begin position="121"/>
        <end position="174"/>
    </location>
</feature>
<feature type="site" description="Important for receptor turnover" evidence="2">
    <location>
        <position position="223"/>
    </location>
</feature>
<feature type="glycosylation site" description="N-linked (GlcNAc...) asparagine" evidence="4">
    <location>
        <position position="42"/>
    </location>
</feature>
<feature type="glycosylation site" description="N-linked (GlcNAc...) asparagine" evidence="6">
    <location>
        <position position="63"/>
    </location>
</feature>
<feature type="glycosylation site" description="N-linked (GlcNAc...) asparagine" evidence="6">
    <location>
        <position position="166"/>
    </location>
</feature>
<feature type="glycosylation site" description="N-linked (GlcNAc...) asparagine" evidence="6">
    <location>
        <position position="181"/>
    </location>
</feature>
<feature type="disulfide bond" evidence="5">
    <location>
        <begin position="47"/>
        <end position="90"/>
    </location>
</feature>
<feature type="disulfide bond" evidence="5">
    <location>
        <begin position="129"/>
        <end position="173"/>
    </location>
</feature>
<reference key="1">
    <citation type="journal article" date="2011" name="Nature">
        <title>A high-resolution map of human evolutionary constraint using 29 mammals.</title>
        <authorList>
            <person name="Lindblad-Toh K."/>
            <person name="Garber M."/>
            <person name="Zuk O."/>
            <person name="Lin M.F."/>
            <person name="Parker B.J."/>
            <person name="Washietl S."/>
            <person name="Kheradpour P."/>
            <person name="Ernst J."/>
            <person name="Jordan G."/>
            <person name="Mauceli E."/>
            <person name="Ward L.D."/>
            <person name="Lowe C.B."/>
            <person name="Holloway A.K."/>
            <person name="Clamp M."/>
            <person name="Gnerre S."/>
            <person name="Alfoldi J."/>
            <person name="Beal K."/>
            <person name="Chang J."/>
            <person name="Clawson H."/>
            <person name="Cuff J."/>
            <person name="Di Palma F."/>
            <person name="Fitzgerald S."/>
            <person name="Flicek P."/>
            <person name="Guttman M."/>
            <person name="Hubisz M.J."/>
            <person name="Jaffe D.B."/>
            <person name="Jungreis I."/>
            <person name="Kent W.J."/>
            <person name="Kostka D."/>
            <person name="Lara M."/>
            <person name="Martins A.L."/>
            <person name="Massingham T."/>
            <person name="Moltke I."/>
            <person name="Raney B.J."/>
            <person name="Rasmussen M.D."/>
            <person name="Robinson J."/>
            <person name="Stark A."/>
            <person name="Vilella A.J."/>
            <person name="Wen J."/>
            <person name="Xie X."/>
            <person name="Zody M.C."/>
            <person name="Baldwin J."/>
            <person name="Bloom T."/>
            <person name="Chin C.W."/>
            <person name="Heiman D."/>
            <person name="Nicol R."/>
            <person name="Nusbaum C."/>
            <person name="Young S."/>
            <person name="Wilkinson J."/>
            <person name="Worley K.C."/>
            <person name="Kovar C.L."/>
            <person name="Muzny D.M."/>
            <person name="Gibbs R.A."/>
            <person name="Cree A."/>
            <person name="Dihn H.H."/>
            <person name="Fowler G."/>
            <person name="Jhangiani S."/>
            <person name="Joshi V."/>
            <person name="Lee S."/>
            <person name="Lewis L.R."/>
            <person name="Nazareth L.V."/>
            <person name="Okwuonu G."/>
            <person name="Santibanez J."/>
            <person name="Warren W.C."/>
            <person name="Mardis E.R."/>
            <person name="Weinstock G.M."/>
            <person name="Wilson R.K."/>
            <person name="Delehaunty K."/>
            <person name="Dooling D."/>
            <person name="Fronik C."/>
            <person name="Fulton L."/>
            <person name="Fulton B."/>
            <person name="Graves T."/>
            <person name="Minx P."/>
            <person name="Sodergren E."/>
            <person name="Birney E."/>
            <person name="Margulies E.H."/>
            <person name="Herrero J."/>
            <person name="Green E.D."/>
            <person name="Haussler D."/>
            <person name="Siepel A."/>
            <person name="Goldman N."/>
            <person name="Pollard K.S."/>
            <person name="Pedersen J.S."/>
            <person name="Lander E.S."/>
            <person name="Kellis M."/>
        </authorList>
    </citation>
    <scope>NUCLEOTIDE SEQUENCE [LARGE SCALE GENOMIC DNA]</scope>
    <source>
        <strain>2N</strain>
    </source>
</reference>
<reference key="2">
    <citation type="journal article" date="1994" name="Bull. World Health Organ.">
        <title>Nomenclature of Fc receptors. IUIS/WHO Subcommittee on Nomenclature of Fc receptors.</title>
        <authorList>
            <person name="Conrad D."/>
            <person name="Cooper M."/>
            <person name="Fridman W.H."/>
            <person name="Kinet J.P."/>
            <person name="Ravetch J."/>
        </authorList>
    </citation>
    <scope>NOMENCLATURE</scope>
</reference>
<reference evidence="9" key="3">
    <citation type="journal article" date="2016" name="J. Infect. Dis. Med.">
        <title>Identification of a guinea pig Fcgamma receptor that exhibits enhanced binding to afucosylated human and mouse IgG.</title>
        <authorList>
            <person name="Mao C."/>
            <person name="Near R."/>
            <person name="Gao W."/>
        </authorList>
    </citation>
    <scope>IDENTIFICATION</scope>
    <scope>FUNCTION</scope>
    <scope>SUBCELLULAR LOCATION</scope>
</reference>
<reference key="4">
    <citation type="journal article" date="2021" name="Antib Ther">
        <title>Cross-species higher sensitivities of FcgammaRIIIA/FcgammaRIV to afucosylated IgG for enhanced ADCC.</title>
        <authorList>
            <person name="Mao C."/>
            <person name="Near R."/>
            <person name="Zhong X."/>
            <person name="Gao W."/>
        </authorList>
    </citation>
    <scope>FUNCTION</scope>
</reference>
<sequence>MWHLLPPSALLLLISSVTKAADPSKAVVLLDPPWVRVLTDDNVTLTCQGAYPPENNNTRWFHNGTHIVGSQAPSYLISGIKVENSGKYQCQTDLSPLSDSVQLQVHADWLVLQTSKWVFQKGESIRLRCHSWKNKRLYKVTYLQNGKPKKFFHNNSEFHIPEATVNHTGSYYCRGLIGHNNKSSGIVAITFQADFAGPSIAPLFPLWQQIAFCLMMGLLFAVDTGLYFFVRRDLRRSMVHKEEYNFKWSQAQDK</sequence>
<proteinExistence type="inferred from homology"/>
<protein>
    <recommendedName>
        <fullName evidence="2">Low affinity immunoglobulin gamma Fc region receptor III-A</fullName>
        <shortName>IgG Fc receptor III-A</shortName>
    </recommendedName>
    <alternativeName>
        <fullName evidence="1">CD16-2</fullName>
    </alternativeName>
    <alternativeName>
        <fullName evidence="1">FcgammaRIV</fullName>
    </alternativeName>
    <cdAntigenName>CD16a</cdAntigenName>
</protein>
<accession>H0VDZ8</accession>
<name>FCG3A_CAVPO</name>
<comment type="function">
    <text evidence="1 7">Receptor for the invariable Fc fragment of immunoglobulin gamma (IgG) (Ref.3). Binds with intermediate affinity to both IgG2a and IgG2b. Can bind to IgG2a and IgG2b monomers. Does not display binding to IgG1 or IgG3 (By similarity). Recognizes neutralizing virus-specific IgGs displayed on the cell surface of infected cells and triggers antibody-dependent cellular cytotoxicity (ADCC). Confers protection to lethal influenza virus infection (By similarity). On splenic dendritic cells, uptakes antigen immune complexes and efficiently divert them into MHC class I and II antigen presentation pathways to provide for superior priming of CD4-positive and CD8-positive T cell immune responses (By similarity). Mediates neutrophil activation by IgG complexes redundantly with FCGR2A (By similarity). Plays a role in promoting bone resorption by enhancing osteoclast differentiation following binding to IgG2a (By similarity). Also acts as a receptor for the Fc region of immunoglobulin epsilon (IgE). Binds with low affinity to both the a and b allotypes of IgE. Has also been shown to bind to IgE allotype a only but not to allotype b. Binds aggregated IgE but not the monomeric form and bound monomeric IgG is readily displaced by IgE complexes. Binding to IgE promotes macrophage-mediated phagocytosis, antigen presentation to T cells, production of pro-inflammatory cytokines and the late phase of cutaneous allergic reactions (By similarity). Mediates enhanced ADCC in response to afucosylated IgGs (PubMed:34485821).</text>
</comment>
<comment type="subunit">
    <text evidence="1">Forms a heterooligomeric complex with ITAM-containing signaling subunits FCER1G. Interacts (via transmembrane domain) with signaling subunits; this interaction is a prerequisite for receptor complex expression on the cell surface and intracellular signal transduction. Binds the Fc region of antigen-complexed IgG.</text>
</comment>
<comment type="subcellular location">
    <subcellularLocation>
        <location evidence="1">Cell membrane</location>
        <topology evidence="4">Single-pass type I membrane protein</topology>
    </subcellularLocation>
</comment>
<comment type="PTM">
    <text evidence="1">N-glycosylated.</text>
</comment>
<comment type="PTM">
    <text evidence="1">Phosphorylated following receptor ligation.</text>
</comment>
<comment type="miscellaneous">
    <text evidence="8">Exhibits stronger binding to afucosylated IgG than to the wild-type fucosylated form.</text>
</comment>
<dbReference type="EMBL" id="AAKN02043138">
    <property type="status" value="NOT_ANNOTATED_CDS"/>
    <property type="molecule type" value="Genomic_DNA"/>
</dbReference>
<dbReference type="SMR" id="H0VDZ8"/>
<dbReference type="FunCoup" id="H0VDZ8">
    <property type="interactions" value="372"/>
</dbReference>
<dbReference type="STRING" id="10141.ENSCPOP00000032089"/>
<dbReference type="GlyCosmos" id="H0VDZ8">
    <property type="glycosylation" value="4 sites, No reported glycans"/>
</dbReference>
<dbReference type="eggNOG" id="ENOG502RU1M">
    <property type="taxonomic scope" value="Eukaryota"/>
</dbReference>
<dbReference type="HOGENOM" id="CLU_023383_1_0_1"/>
<dbReference type="InParanoid" id="H0VDZ8"/>
<dbReference type="TreeFam" id="TF335097"/>
<dbReference type="Proteomes" id="UP000005447">
    <property type="component" value="Unassembled WGS sequence"/>
</dbReference>
<dbReference type="GO" id="GO:0009986">
    <property type="term" value="C:cell surface"/>
    <property type="evidence" value="ECO:0000250"/>
    <property type="project" value="UniProtKB"/>
</dbReference>
<dbReference type="GO" id="GO:0009897">
    <property type="term" value="C:external side of plasma membrane"/>
    <property type="evidence" value="ECO:0007669"/>
    <property type="project" value="TreeGrafter"/>
</dbReference>
<dbReference type="GO" id="GO:0019863">
    <property type="term" value="F:IgE binding"/>
    <property type="evidence" value="ECO:0007669"/>
    <property type="project" value="UniProtKB-KW"/>
</dbReference>
<dbReference type="GO" id="GO:0019767">
    <property type="term" value="F:IgE receptor activity"/>
    <property type="evidence" value="ECO:0000250"/>
    <property type="project" value="UniProtKB"/>
</dbReference>
<dbReference type="GO" id="GO:0019864">
    <property type="term" value="F:IgG binding"/>
    <property type="evidence" value="ECO:0007669"/>
    <property type="project" value="UniProtKB-KW"/>
</dbReference>
<dbReference type="GO" id="GO:0019770">
    <property type="term" value="F:IgG receptor activity"/>
    <property type="evidence" value="ECO:0000250"/>
    <property type="project" value="UniProtKB"/>
</dbReference>
<dbReference type="GO" id="GO:0001788">
    <property type="term" value="P:antibody-dependent cellular cytotoxicity"/>
    <property type="evidence" value="ECO:0007669"/>
    <property type="project" value="TreeGrafter"/>
</dbReference>
<dbReference type="GO" id="GO:0042119">
    <property type="term" value="P:neutrophil activation"/>
    <property type="evidence" value="ECO:0000250"/>
    <property type="project" value="UniProtKB"/>
</dbReference>
<dbReference type="GO" id="GO:0045780">
    <property type="term" value="P:positive regulation of bone resorption"/>
    <property type="evidence" value="ECO:0000250"/>
    <property type="project" value="UniProtKB"/>
</dbReference>
<dbReference type="CDD" id="cd05752">
    <property type="entry name" value="Ig1_FcgammaR_like"/>
    <property type="match status" value="1"/>
</dbReference>
<dbReference type="CDD" id="cd05753">
    <property type="entry name" value="Ig2_FcgammaR_like"/>
    <property type="match status" value="1"/>
</dbReference>
<dbReference type="FunFam" id="2.60.40.10:FF:000217">
    <property type="entry name" value="High affinity immunoglobulin gamma Fc receptor I"/>
    <property type="match status" value="1"/>
</dbReference>
<dbReference type="FunFam" id="2.60.40.10:FF:000356">
    <property type="entry name" value="Low affinity immunoglobulin gamma Fc region receptor III-A"/>
    <property type="match status" value="1"/>
</dbReference>
<dbReference type="Gene3D" id="2.60.40.10">
    <property type="entry name" value="Immunoglobulins"/>
    <property type="match status" value="2"/>
</dbReference>
<dbReference type="InterPro" id="IPR007110">
    <property type="entry name" value="Ig-like_dom"/>
</dbReference>
<dbReference type="InterPro" id="IPR036179">
    <property type="entry name" value="Ig-like_dom_sf"/>
</dbReference>
<dbReference type="InterPro" id="IPR013783">
    <property type="entry name" value="Ig-like_fold"/>
</dbReference>
<dbReference type="InterPro" id="IPR050488">
    <property type="entry name" value="Ig_Fc_receptor"/>
</dbReference>
<dbReference type="InterPro" id="IPR003599">
    <property type="entry name" value="Ig_sub"/>
</dbReference>
<dbReference type="InterPro" id="IPR003598">
    <property type="entry name" value="Ig_sub2"/>
</dbReference>
<dbReference type="PANTHER" id="PTHR11481">
    <property type="entry name" value="IMMUNOGLOBULIN FC RECEPTOR"/>
    <property type="match status" value="1"/>
</dbReference>
<dbReference type="PANTHER" id="PTHR11481:SF103">
    <property type="entry name" value="LOW AFFINITY IMMUNOGLOBULIN GAMMA FC REGION RECEPTOR III-A-RELATED"/>
    <property type="match status" value="1"/>
</dbReference>
<dbReference type="Pfam" id="PF13895">
    <property type="entry name" value="Ig_2"/>
    <property type="match status" value="2"/>
</dbReference>
<dbReference type="SMART" id="SM00409">
    <property type="entry name" value="IG"/>
    <property type="match status" value="2"/>
</dbReference>
<dbReference type="SMART" id="SM00408">
    <property type="entry name" value="IGc2"/>
    <property type="match status" value="2"/>
</dbReference>
<dbReference type="SUPFAM" id="SSF48726">
    <property type="entry name" value="Immunoglobulin"/>
    <property type="match status" value="2"/>
</dbReference>
<dbReference type="PROSITE" id="PS50835">
    <property type="entry name" value="IG_LIKE"/>
    <property type="match status" value="2"/>
</dbReference>
<evidence type="ECO:0000250" key="1">
    <source>
        <dbReference type="UniProtKB" id="A0A0B4J1G0"/>
    </source>
</evidence>
<evidence type="ECO:0000250" key="2">
    <source>
        <dbReference type="UniProtKB" id="P08637"/>
    </source>
</evidence>
<evidence type="ECO:0000250" key="3">
    <source>
        <dbReference type="UniProtKB" id="Q6XPU4"/>
    </source>
</evidence>
<evidence type="ECO:0000255" key="4"/>
<evidence type="ECO:0000255" key="5">
    <source>
        <dbReference type="PROSITE-ProRule" id="PRU00114"/>
    </source>
</evidence>
<evidence type="ECO:0000255" key="6">
    <source>
        <dbReference type="PROSITE-ProRule" id="PRU00498"/>
    </source>
</evidence>
<evidence type="ECO:0000269" key="7">
    <source>
    </source>
</evidence>
<evidence type="ECO:0000269" key="8">
    <source ref="3"/>
</evidence>
<evidence type="ECO:0000305" key="9"/>
<gene>
    <name evidence="3" type="primary">Fcgr3a</name>
    <name evidence="3" type="synonym">Fcgr4</name>
</gene>
<keyword id="KW-1003">Cell membrane</keyword>
<keyword id="KW-1015">Disulfide bond</keyword>
<keyword id="KW-0325">Glycoprotein</keyword>
<keyword id="KW-0389">IgE-binding protein</keyword>
<keyword id="KW-0390">IgG-binding protein</keyword>
<keyword id="KW-0391">Immunity</keyword>
<keyword id="KW-0393">Immunoglobulin domain</keyword>
<keyword id="KW-0472">Membrane</keyword>
<keyword id="KW-0597">Phosphoprotein</keyword>
<keyword id="KW-0675">Receptor</keyword>
<keyword id="KW-1185">Reference proteome</keyword>
<keyword id="KW-0677">Repeat</keyword>
<keyword id="KW-0732">Signal</keyword>
<keyword id="KW-0812">Transmembrane</keyword>
<keyword id="KW-1133">Transmembrane helix</keyword>
<organism>
    <name type="scientific">Cavia porcellus</name>
    <name type="common">Guinea pig</name>
    <dbReference type="NCBI Taxonomy" id="10141"/>
    <lineage>
        <taxon>Eukaryota</taxon>
        <taxon>Metazoa</taxon>
        <taxon>Chordata</taxon>
        <taxon>Craniata</taxon>
        <taxon>Vertebrata</taxon>
        <taxon>Euteleostomi</taxon>
        <taxon>Mammalia</taxon>
        <taxon>Eutheria</taxon>
        <taxon>Euarchontoglires</taxon>
        <taxon>Glires</taxon>
        <taxon>Rodentia</taxon>
        <taxon>Hystricomorpha</taxon>
        <taxon>Caviidae</taxon>
        <taxon>Cavia</taxon>
    </lineage>
</organism>